<accession>P17915</accession>
<proteinExistence type="inferred from homology"/>
<evidence type="ECO:0000305" key="1"/>
<name>TYF1_TREPE</name>
<dbReference type="EMBL" id="M32401">
    <property type="protein sequence ID" value="AAA27483.1"/>
    <property type="molecule type" value="Genomic_DNA"/>
</dbReference>
<dbReference type="RefSeq" id="WP_014342705.1">
    <property type="nucleotide sequence ID" value="NZ_CP170149.1"/>
</dbReference>
<dbReference type="SMR" id="P17915"/>
<dbReference type="OMA" id="YLQTHNF"/>
<dbReference type="GO" id="GO:0008199">
    <property type="term" value="F:ferric iron binding"/>
    <property type="evidence" value="ECO:0007669"/>
    <property type="project" value="InterPro"/>
</dbReference>
<dbReference type="GO" id="GO:0016722">
    <property type="term" value="F:oxidoreductase activity, acting on metal ions"/>
    <property type="evidence" value="ECO:0007669"/>
    <property type="project" value="InterPro"/>
</dbReference>
<dbReference type="CDD" id="cd01043">
    <property type="entry name" value="DPS"/>
    <property type="match status" value="1"/>
</dbReference>
<dbReference type="Gene3D" id="1.20.1260.10">
    <property type="match status" value="1"/>
</dbReference>
<dbReference type="InterPro" id="IPR002177">
    <property type="entry name" value="DPS_DNA-bd"/>
</dbReference>
<dbReference type="InterPro" id="IPR023188">
    <property type="entry name" value="DPS_DNA-bd_CS"/>
</dbReference>
<dbReference type="InterPro" id="IPR012347">
    <property type="entry name" value="Ferritin-like"/>
</dbReference>
<dbReference type="InterPro" id="IPR009078">
    <property type="entry name" value="Ferritin-like_SF"/>
</dbReference>
<dbReference type="InterPro" id="IPR008331">
    <property type="entry name" value="Ferritin_DPS_dom"/>
</dbReference>
<dbReference type="PANTHER" id="PTHR42932">
    <property type="entry name" value="GENERAL STRESS PROTEIN 20U"/>
    <property type="match status" value="1"/>
</dbReference>
<dbReference type="PANTHER" id="PTHR42932:SF1">
    <property type="entry name" value="GENERAL STRESS PROTEIN 20U"/>
    <property type="match status" value="1"/>
</dbReference>
<dbReference type="Pfam" id="PF00210">
    <property type="entry name" value="Ferritin"/>
    <property type="match status" value="1"/>
</dbReference>
<dbReference type="PIRSF" id="PIRSF005900">
    <property type="entry name" value="Dps"/>
    <property type="match status" value="1"/>
</dbReference>
<dbReference type="PRINTS" id="PR01346">
    <property type="entry name" value="HELNAPAPROT"/>
</dbReference>
<dbReference type="SUPFAM" id="SSF47240">
    <property type="entry name" value="Ferritin-like"/>
    <property type="match status" value="1"/>
</dbReference>
<dbReference type="PROSITE" id="PS00818">
    <property type="entry name" value="DPS_1"/>
    <property type="match status" value="1"/>
</dbReference>
<dbReference type="PROSITE" id="PS00819">
    <property type="entry name" value="DPS_2"/>
    <property type="match status" value="1"/>
</dbReference>
<feature type="initiator methionine" description="Removed">
    <location>
        <position position="1"/>
    </location>
</feature>
<feature type="chain" id="PRO_0000201665" description="Antigen TyF1">
    <location>
        <begin position="2"/>
        <end position="177"/>
    </location>
</feature>
<protein>
    <recommendedName>
        <fullName>Antigen TyF1</fullName>
    </recommendedName>
</protein>
<organism>
    <name type="scientific">Treponema pallidum subsp. pertenue</name>
    <name type="common">Yaws treponeme</name>
    <dbReference type="NCBI Taxonomy" id="168"/>
    <lineage>
        <taxon>Bacteria</taxon>
        <taxon>Pseudomonadati</taxon>
        <taxon>Spirochaetota</taxon>
        <taxon>Spirochaetia</taxon>
        <taxon>Spirochaetales</taxon>
        <taxon>Treponemataceae</taxon>
        <taxon>Treponema</taxon>
    </lineage>
</organism>
<reference key="1">
    <citation type="journal article" date="1989" name="Microb. Pathog.">
        <title>Treponema pallidum subspecies pallidum (Nichols) and Treponema pallidum subspecies pertenue (CDC 2575) differ in at least one nucleotide: comparison of two homologous antigens.</title>
        <authorList>
            <person name="Noordhoek G.T."/>
            <person name="Hermans P.W.M."/>
            <person name="Paul A.N."/>
            <person name="Schouls L.M."/>
            <person name="van der Sluis J.J."/>
            <person name="van Embden J.D.A."/>
        </authorList>
    </citation>
    <scope>NUCLEOTIDE SEQUENCE [GENOMIC DNA]</scope>
    <source>
        <strain>CDC 2575</strain>
    </source>
</reference>
<comment type="subunit">
    <text>Homodecamer.</text>
</comment>
<comment type="similarity">
    <text evidence="1">Belongs to the Dps family.</text>
</comment>
<sequence length="177" mass="19389">MNMCTDGKKYHSTATSAAVGASAPGVPDARAIAAICEQLRRHVADLGVLYIKLHNYHWHIYGIEFKQVHELLEEYYVSVTEAFDTIAERLLQLGAQAPASMAEYLALSGIAEETEKEITIVSALARVKRDFEYLSTRFSQTQVLAAESGDAVTDGIITDILRTLGKAIWMLGATLKA</sequence>